<organism>
    <name type="scientific">Chlamydia trachomatis serovar A (strain ATCC VR-571B / DSM 19440 / HAR-13)</name>
    <dbReference type="NCBI Taxonomy" id="315277"/>
    <lineage>
        <taxon>Bacteria</taxon>
        <taxon>Pseudomonadati</taxon>
        <taxon>Chlamydiota</taxon>
        <taxon>Chlamydiia</taxon>
        <taxon>Chlamydiales</taxon>
        <taxon>Chlamydiaceae</taxon>
        <taxon>Chlamydia/Chlamydophila group</taxon>
        <taxon>Chlamydia</taxon>
    </lineage>
</organism>
<feature type="chain" id="PRO_0000303318" description="tRNA N6-adenosine threonylcarbamoyltransferase">
    <location>
        <begin position="1"/>
        <end position="338"/>
    </location>
</feature>
<feature type="binding site" evidence="1">
    <location>
        <position position="109"/>
    </location>
    <ligand>
        <name>Fe cation</name>
        <dbReference type="ChEBI" id="CHEBI:24875"/>
    </ligand>
</feature>
<feature type="binding site" evidence="1">
    <location>
        <position position="113"/>
    </location>
    <ligand>
        <name>Fe cation</name>
        <dbReference type="ChEBI" id="CHEBI:24875"/>
    </ligand>
</feature>
<feature type="binding site" evidence="1">
    <location>
        <begin position="132"/>
        <end position="136"/>
    </location>
    <ligand>
        <name>substrate</name>
    </ligand>
</feature>
<feature type="binding site" evidence="1">
    <location>
        <position position="165"/>
    </location>
    <ligand>
        <name>substrate</name>
    </ligand>
</feature>
<feature type="binding site" evidence="1">
    <location>
        <position position="178"/>
    </location>
    <ligand>
        <name>substrate</name>
    </ligand>
</feature>
<feature type="binding site" evidence="1">
    <location>
        <position position="277"/>
    </location>
    <ligand>
        <name>substrate</name>
    </ligand>
</feature>
<feature type="binding site" evidence="1">
    <location>
        <position position="302"/>
    </location>
    <ligand>
        <name>Fe cation</name>
        <dbReference type="ChEBI" id="CHEBI:24875"/>
    </ligand>
</feature>
<keyword id="KW-0012">Acyltransferase</keyword>
<keyword id="KW-0963">Cytoplasm</keyword>
<keyword id="KW-0408">Iron</keyword>
<keyword id="KW-0479">Metal-binding</keyword>
<keyword id="KW-0808">Transferase</keyword>
<keyword id="KW-0819">tRNA processing</keyword>
<proteinExistence type="inferred from homology"/>
<dbReference type="EC" id="2.3.1.234" evidence="1"/>
<dbReference type="EMBL" id="CP000051">
    <property type="protein sequence ID" value="AAX50457.1"/>
    <property type="molecule type" value="Genomic_DNA"/>
</dbReference>
<dbReference type="RefSeq" id="WP_009871543.1">
    <property type="nucleotide sequence ID" value="NC_007429.1"/>
</dbReference>
<dbReference type="SMR" id="Q3KMG5"/>
<dbReference type="KEGG" id="cta:CTA_0215"/>
<dbReference type="HOGENOM" id="CLU_023208_0_2_0"/>
<dbReference type="Proteomes" id="UP000002532">
    <property type="component" value="Chromosome"/>
</dbReference>
<dbReference type="GO" id="GO:0005737">
    <property type="term" value="C:cytoplasm"/>
    <property type="evidence" value="ECO:0007669"/>
    <property type="project" value="UniProtKB-SubCell"/>
</dbReference>
<dbReference type="GO" id="GO:0005506">
    <property type="term" value="F:iron ion binding"/>
    <property type="evidence" value="ECO:0007669"/>
    <property type="project" value="UniProtKB-UniRule"/>
</dbReference>
<dbReference type="GO" id="GO:0061711">
    <property type="term" value="F:N(6)-L-threonylcarbamoyladenine synthase activity"/>
    <property type="evidence" value="ECO:0007669"/>
    <property type="project" value="UniProtKB-EC"/>
</dbReference>
<dbReference type="GO" id="GO:0002949">
    <property type="term" value="P:tRNA threonylcarbamoyladenosine modification"/>
    <property type="evidence" value="ECO:0007669"/>
    <property type="project" value="UniProtKB-UniRule"/>
</dbReference>
<dbReference type="CDD" id="cd24133">
    <property type="entry name" value="ASKHA_NBD_TsaD_bac"/>
    <property type="match status" value="1"/>
</dbReference>
<dbReference type="FunFam" id="3.30.420.40:FF:000012">
    <property type="entry name" value="tRNA N6-adenosine threonylcarbamoyltransferase"/>
    <property type="match status" value="1"/>
</dbReference>
<dbReference type="FunFam" id="3.30.420.40:FF:000288">
    <property type="entry name" value="tRNA N6-adenosine threonylcarbamoyltransferase"/>
    <property type="match status" value="1"/>
</dbReference>
<dbReference type="Gene3D" id="3.30.420.40">
    <property type="match status" value="2"/>
</dbReference>
<dbReference type="HAMAP" id="MF_01445">
    <property type="entry name" value="TsaD"/>
    <property type="match status" value="1"/>
</dbReference>
<dbReference type="InterPro" id="IPR043129">
    <property type="entry name" value="ATPase_NBD"/>
</dbReference>
<dbReference type="InterPro" id="IPR000905">
    <property type="entry name" value="Gcp-like_dom"/>
</dbReference>
<dbReference type="InterPro" id="IPR017861">
    <property type="entry name" value="KAE1/TsaD"/>
</dbReference>
<dbReference type="InterPro" id="IPR017860">
    <property type="entry name" value="Peptidase_M22_CS"/>
</dbReference>
<dbReference type="InterPro" id="IPR022450">
    <property type="entry name" value="TsaD"/>
</dbReference>
<dbReference type="NCBIfam" id="TIGR00329">
    <property type="entry name" value="gcp_kae1"/>
    <property type="match status" value="1"/>
</dbReference>
<dbReference type="NCBIfam" id="TIGR03723">
    <property type="entry name" value="T6A_TsaD_YgjD"/>
    <property type="match status" value="1"/>
</dbReference>
<dbReference type="PANTHER" id="PTHR11735">
    <property type="entry name" value="TRNA N6-ADENOSINE THREONYLCARBAMOYLTRANSFERASE"/>
    <property type="match status" value="1"/>
</dbReference>
<dbReference type="PANTHER" id="PTHR11735:SF6">
    <property type="entry name" value="TRNA N6-ADENOSINE THREONYLCARBAMOYLTRANSFERASE, MITOCHONDRIAL"/>
    <property type="match status" value="1"/>
</dbReference>
<dbReference type="Pfam" id="PF00814">
    <property type="entry name" value="TsaD"/>
    <property type="match status" value="1"/>
</dbReference>
<dbReference type="PRINTS" id="PR00789">
    <property type="entry name" value="OSIALOPTASE"/>
</dbReference>
<dbReference type="SUPFAM" id="SSF53067">
    <property type="entry name" value="Actin-like ATPase domain"/>
    <property type="match status" value="1"/>
</dbReference>
<dbReference type="PROSITE" id="PS01016">
    <property type="entry name" value="GLYCOPROTEASE"/>
    <property type="match status" value="1"/>
</dbReference>
<reference key="1">
    <citation type="journal article" date="2005" name="Infect. Immun.">
        <title>Comparative genomic analysis of Chlamydia trachomatis oculotropic and genitotropic strains.</title>
        <authorList>
            <person name="Carlson J.H."/>
            <person name="Porcella S.F."/>
            <person name="McClarty G."/>
            <person name="Caldwell H.D."/>
        </authorList>
    </citation>
    <scope>NUCLEOTIDE SEQUENCE [LARGE SCALE GENOMIC DNA]</scope>
    <source>
        <strain>ATCC VR-571B / DSM 19440 / HAR-13</strain>
    </source>
</reference>
<comment type="function">
    <text evidence="1">Required for the formation of a threonylcarbamoyl group on adenosine at position 37 (t(6)A37) in tRNAs that read codons beginning with adenine. Is involved in the transfer of the threonylcarbamoyl moiety of threonylcarbamoyl-AMP (TC-AMP) to the N6 group of A37, together with TsaE and TsaB. TsaD likely plays a direct catalytic role in this reaction.</text>
</comment>
<comment type="catalytic activity">
    <reaction evidence="1">
        <text>L-threonylcarbamoyladenylate + adenosine(37) in tRNA = N(6)-L-threonylcarbamoyladenosine(37) in tRNA + AMP + H(+)</text>
        <dbReference type="Rhea" id="RHEA:37059"/>
        <dbReference type="Rhea" id="RHEA-COMP:10162"/>
        <dbReference type="Rhea" id="RHEA-COMP:10163"/>
        <dbReference type="ChEBI" id="CHEBI:15378"/>
        <dbReference type="ChEBI" id="CHEBI:73682"/>
        <dbReference type="ChEBI" id="CHEBI:74411"/>
        <dbReference type="ChEBI" id="CHEBI:74418"/>
        <dbReference type="ChEBI" id="CHEBI:456215"/>
        <dbReference type="EC" id="2.3.1.234"/>
    </reaction>
</comment>
<comment type="cofactor">
    <cofactor evidence="1">
        <name>Fe(2+)</name>
        <dbReference type="ChEBI" id="CHEBI:29033"/>
    </cofactor>
    <text evidence="1">Binds 1 Fe(2+) ion per subunit.</text>
</comment>
<comment type="subcellular location">
    <subcellularLocation>
        <location evidence="1">Cytoplasm</location>
    </subcellularLocation>
</comment>
<comment type="similarity">
    <text evidence="1">Belongs to the KAE1 / TsaD family.</text>
</comment>
<evidence type="ECO:0000255" key="1">
    <source>
        <dbReference type="HAMAP-Rule" id="MF_01445"/>
    </source>
</evidence>
<name>TSAD_CHLTA</name>
<protein>
    <recommendedName>
        <fullName evidence="1">tRNA N6-adenosine threonylcarbamoyltransferase</fullName>
        <ecNumber evidence="1">2.3.1.234</ecNumber>
    </recommendedName>
    <alternativeName>
        <fullName evidence="1">N6-L-threonylcarbamoyladenine synthase</fullName>
        <shortName evidence="1">t(6)A synthase</shortName>
    </alternativeName>
    <alternativeName>
        <fullName evidence="1">t(6)A37 threonylcarbamoyladenosine biosynthesis protein TsaD</fullName>
    </alternativeName>
    <alternativeName>
        <fullName evidence="1">tRNA threonylcarbamoyladenosine biosynthesis protein TsaD</fullName>
    </alternativeName>
</protein>
<sequence length="338" mass="35922">MLTLGLESSCDETSCSLVQNGKILANKIASQDIHASYGGVIPELASRAHLQTFPELLTAATQSAGVSLEDIELISVANTPGLIGALSIGVNFAKGLASGLKRPLIGVNHVEAHLYAACMEAPATQFPALGLAISGAHTSLFLMPDATTFLLIGKTRDDAIGETFDKVARFLGLPYPGGQKLEELAREGDADAFAFSPARVSGYDFSFSGLKTAVLYALKGNNSSAKAPFPEVSETQKRNIAASFQKAVFMTIAQKLPDIVKTFSCESLIVGGGVANNSYFRRLLNQICSLPIYFPSSQLCSDNAAMIAGLGERLFCNRTHVSKEVIPCARYQWESACS</sequence>
<gene>
    <name evidence="1" type="primary">tsaD</name>
    <name type="synonym">gcp</name>
    <name type="ordered locus">CTA_0215</name>
</gene>
<accession>Q3KMG5</accession>